<name>HBEAG_DHBVQ</name>
<accession>Q89860</accession>
<keyword id="KW-0024">Alternative initiation</keyword>
<keyword id="KW-0945">Host-virus interaction</keyword>
<keyword id="KW-1185">Reference proteome</keyword>
<keyword id="KW-0964">Secreted</keyword>
<keyword id="KW-0732">Signal</keyword>
<keyword id="KW-0899">Viral immunoevasion</keyword>
<proteinExistence type="inferred from homology"/>
<evidence type="ECO:0000250" key="1"/>
<evidence type="ECO:0000255" key="2"/>
<evidence type="ECO:0000256" key="3">
    <source>
        <dbReference type="SAM" id="MobiDB-lite"/>
    </source>
</evidence>
<evidence type="ECO:0000305" key="4"/>
<gene>
    <name type="primary">C</name>
</gene>
<dbReference type="EMBL" id="X60213">
    <property type="protein sequence ID" value="CAA42766.1"/>
    <property type="molecule type" value="Genomic_DNA"/>
</dbReference>
<dbReference type="PIR" id="S12843">
    <property type="entry name" value="S12843"/>
</dbReference>
<dbReference type="RefSeq" id="NP_039827.1">
    <property type="nucleotide sequence ID" value="NC_001344.1"/>
</dbReference>
<dbReference type="SMR" id="Q89860"/>
<dbReference type="KEGG" id="vg:2546410"/>
<dbReference type="Proteomes" id="UP000009098">
    <property type="component" value="Segment"/>
</dbReference>
<dbReference type="GO" id="GO:0005576">
    <property type="term" value="C:extracellular region"/>
    <property type="evidence" value="ECO:0007669"/>
    <property type="project" value="UniProtKB-SubCell"/>
</dbReference>
<dbReference type="GO" id="GO:0005198">
    <property type="term" value="F:structural molecule activity"/>
    <property type="evidence" value="ECO:0007669"/>
    <property type="project" value="InterPro"/>
</dbReference>
<dbReference type="Gene3D" id="1.10.4090.10">
    <property type="entry name" value="Viral capsid, core domain supefamily, Hepatitis B virus"/>
    <property type="match status" value="2"/>
</dbReference>
<dbReference type="InterPro" id="IPR002006">
    <property type="entry name" value="Hepatitis_core"/>
</dbReference>
<dbReference type="InterPro" id="IPR036459">
    <property type="entry name" value="Viral_capsid_core_dom_sf_HBV"/>
</dbReference>
<dbReference type="Pfam" id="PF00906">
    <property type="entry name" value="Hepatitis_core"/>
    <property type="match status" value="1"/>
</dbReference>
<dbReference type="SUPFAM" id="SSF47852">
    <property type="entry name" value="Hepatitis B viral capsid (hbcag)"/>
    <property type="match status" value="1"/>
</dbReference>
<reference key="1">
    <citation type="submission" date="1991-06" db="EMBL/GenBank/DDBJ databases">
        <title>Complete nucleotide sequence of a chinese Hepatitis B virus.</title>
        <authorList>
            <person name="Tong S."/>
            <person name="Mattes F."/>
            <person name="Blum H.E."/>
            <person name="Fernholz D."/>
            <person name="Schneider R."/>
            <person name="Will H."/>
        </authorList>
    </citation>
    <scope>NUCLEOTIDE SEQUENCE [GENOMIC DNA]</scope>
</reference>
<organism>
    <name type="scientific">Duck hepatitis B virus (isolate Shanghai/DHBVQCA34)</name>
    <name type="common">DHBV</name>
    <dbReference type="NCBI Taxonomy" id="644639"/>
    <lineage>
        <taxon>Viruses</taxon>
        <taxon>Riboviria</taxon>
        <taxon>Pararnavirae</taxon>
        <taxon>Artverviricota</taxon>
        <taxon>Revtraviricetes</taxon>
        <taxon>Blubervirales</taxon>
        <taxon>Hepadnaviridae</taxon>
        <taxon>Avihepadnavirus</taxon>
        <taxon>Duck hepatitis B virus</taxon>
    </lineage>
</organism>
<organismHost>
    <name type="scientific">Anas</name>
    <name type="common">ducks</name>
    <dbReference type="NCBI Taxonomy" id="8835"/>
</organismHost>
<protein>
    <recommendedName>
        <fullName>External core antigen</fullName>
    </recommendedName>
    <alternativeName>
        <fullName>HBeAg</fullName>
    </alternativeName>
    <alternativeName>
        <fullName>Precore protein</fullName>
    </alternativeName>
</protein>
<comment type="function">
    <text evidence="1">May regulate immune response to the intracellular capsid in acting as a T-cell tolerogen, by having an immunoregulatory effect which prevents destruction of infected cells by cytotoxic T-cells.</text>
</comment>
<comment type="subunit">
    <text evidence="1">Homodimerizes.</text>
</comment>
<comment type="subcellular location">
    <subcellularLocation>
        <location evidence="1">Secreted</location>
    </subcellularLocation>
</comment>
<comment type="alternative products">
    <event type="alternative initiation"/>
    <isoform>
        <id>Q89860-1</id>
        <name>External core antigen</name>
        <sequence type="displayed"/>
    </isoform>
    <isoform>
        <id>Q66406-1</id>
        <name>Capsid protein</name>
        <sequence type="external"/>
    </isoform>
</comment>
<comment type="similarity">
    <text evidence="4">Belongs to the avihepadnavirus precore antigen family.</text>
</comment>
<feature type="signal peptide" evidence="2">
    <location>
        <begin position="1"/>
        <end position="19"/>
    </location>
</feature>
<feature type="chain" id="PRO_0000397678" description="External core antigen">
    <location>
        <begin position="20"/>
        <end position="272"/>
    </location>
</feature>
<feature type="propeptide" id="PRO_0000397679" evidence="1">
    <location>
        <begin position="273"/>
        <end position="305"/>
    </location>
</feature>
<feature type="region of interest" description="Disordered" evidence="3">
    <location>
        <begin position="226"/>
        <end position="305"/>
    </location>
</feature>
<feature type="compositionally biased region" description="Basic residues" evidence="3">
    <location>
        <begin position="258"/>
        <end position="277"/>
    </location>
</feature>
<feature type="compositionally biased region" description="Basic residues" evidence="3">
    <location>
        <begin position="295"/>
        <end position="305"/>
    </location>
</feature>
<feature type="site" description="Cleavage; by host" evidence="1">
    <location>
        <begin position="272"/>
        <end position="273"/>
    </location>
</feature>
<sequence>MWNLRITPLSFGAACQGIFTSTLLLSALTVPLVCTIVYDSCLYMDINASRALANVYDLPDDFFPKIDDLVRDAKDALEPYWKSDSIKKHVLIATHFVDLIEDFWQTTQGMHEIAESLRAVIPPTTAPVPTGYLIQHEEAEEIPLGDLFKHQEERIVSFQPDYPITARIHAHLKAYAKINEESLDRARRLLWWHYNCLLWGEANVTNYISRLRTWLSTPEKYRGRDAPTIEAITRPIQAAQGGRKTSSGTRKPRGLEPRRRKVKTTVVYGRRRSKSRERRAPSPQRAGSPLPRSSSSHHRSPSPRK</sequence>